<proteinExistence type="inferred from homology"/>
<keyword id="KW-0997">Cell inner membrane</keyword>
<keyword id="KW-1003">Cell membrane</keyword>
<keyword id="KW-0201">Cytochrome c-type biogenesis</keyword>
<keyword id="KW-0472">Membrane</keyword>
<keyword id="KW-1185">Reference proteome</keyword>
<keyword id="KW-0812">Transmembrane</keyword>
<keyword id="KW-1133">Transmembrane helix</keyword>
<keyword id="KW-0813">Transport</keyword>
<name>CCMC_ECO57</name>
<protein>
    <recommendedName>
        <fullName>Heme exporter protein C</fullName>
    </recommendedName>
    <alternativeName>
        <fullName>Cytochrome c-type biogenesis protein CcmC</fullName>
    </alternativeName>
</protein>
<sequence length="245" mass="27885">MWKTLHQLAIPPRLYQICGWFIPWLAIASVVVLTVGWIWGFGFAPADYQQGNSYRIIYLHVPAAIWSMGIYASMAVAAFIGLVWQMKMANLAVAAMAPIGAVFTFIALVTGSAWGKPMWGTWWVWDARLTSELVLLFLYVGVIALWHAFDDRRLAGRAAGILVLIGVVNLPIIHYSVEWWNTLHQGSTRMQQSIDPAMRSPLRWSIFGFLLLSATLTLMRMRNLILLMEKRRPWVSELILKRGRK</sequence>
<feature type="chain" id="PRO_0000201552" description="Heme exporter protein C">
    <location>
        <begin position="1"/>
        <end position="245"/>
    </location>
</feature>
<feature type="topological domain" description="Cytoplasmic" evidence="2">
    <location>
        <begin position="1"/>
        <end position="20"/>
    </location>
</feature>
<feature type="transmembrane region" description="Helical" evidence="2">
    <location>
        <begin position="21"/>
        <end position="41"/>
    </location>
</feature>
<feature type="topological domain" description="Periplasmic" evidence="2">
    <location>
        <begin position="42"/>
        <end position="63"/>
    </location>
</feature>
<feature type="transmembrane region" description="Helical" evidence="2">
    <location>
        <begin position="64"/>
        <end position="84"/>
    </location>
</feature>
<feature type="topological domain" description="Cytoplasmic" evidence="2">
    <location>
        <begin position="85"/>
        <end position="90"/>
    </location>
</feature>
<feature type="transmembrane region" description="Helical" evidence="2">
    <location>
        <begin position="91"/>
        <end position="111"/>
    </location>
</feature>
<feature type="topological domain" description="Periplasmic" evidence="2">
    <location>
        <begin position="112"/>
        <end position="128"/>
    </location>
</feature>
<feature type="transmembrane region" description="Helical" evidence="2">
    <location>
        <begin position="129"/>
        <end position="149"/>
    </location>
</feature>
<feature type="topological domain" description="Cytoplasmic" evidence="2">
    <location>
        <begin position="150"/>
        <end position="159"/>
    </location>
</feature>
<feature type="transmembrane region" description="Helical" evidence="2">
    <location>
        <begin position="160"/>
        <end position="180"/>
    </location>
</feature>
<feature type="topological domain" description="Periplasmic" evidence="2">
    <location>
        <begin position="181"/>
        <end position="205"/>
    </location>
</feature>
<feature type="transmembrane region" description="Helical" evidence="2">
    <location>
        <begin position="206"/>
        <end position="226"/>
    </location>
</feature>
<feature type="topological domain" description="Cytoplasmic" evidence="2">
    <location>
        <begin position="227"/>
        <end position="245"/>
    </location>
</feature>
<dbReference type="EMBL" id="AE005174">
    <property type="protein sequence ID" value="AAG57334.1"/>
    <property type="molecule type" value="Genomic_DNA"/>
</dbReference>
<dbReference type="EMBL" id="BA000007">
    <property type="protein sequence ID" value="BAB36511.1"/>
    <property type="molecule type" value="Genomic_DNA"/>
</dbReference>
<dbReference type="PIR" id="B85859">
    <property type="entry name" value="B85859"/>
</dbReference>
<dbReference type="PIR" id="H91014">
    <property type="entry name" value="H91014"/>
</dbReference>
<dbReference type="RefSeq" id="NP_311115.1">
    <property type="nucleotide sequence ID" value="NC_002695.1"/>
</dbReference>
<dbReference type="RefSeq" id="WP_001295447.1">
    <property type="nucleotide sequence ID" value="NZ_VOAI01000001.1"/>
</dbReference>
<dbReference type="SMR" id="P0ABM3"/>
<dbReference type="STRING" id="155864.Z3456"/>
<dbReference type="GeneID" id="916794"/>
<dbReference type="GeneID" id="93774979"/>
<dbReference type="KEGG" id="ece:Z3456"/>
<dbReference type="KEGG" id="ecs:ECs_3088"/>
<dbReference type="PATRIC" id="fig|386585.9.peg.3222"/>
<dbReference type="eggNOG" id="COG0755">
    <property type="taxonomic scope" value="Bacteria"/>
</dbReference>
<dbReference type="HOGENOM" id="CLU_066538_2_0_6"/>
<dbReference type="OMA" id="VQRIFYF"/>
<dbReference type="Proteomes" id="UP000000558">
    <property type="component" value="Chromosome"/>
</dbReference>
<dbReference type="Proteomes" id="UP000002519">
    <property type="component" value="Chromosome"/>
</dbReference>
<dbReference type="GO" id="GO:0005886">
    <property type="term" value="C:plasma membrane"/>
    <property type="evidence" value="ECO:0007669"/>
    <property type="project" value="UniProtKB-SubCell"/>
</dbReference>
<dbReference type="GO" id="GO:0020037">
    <property type="term" value="F:heme binding"/>
    <property type="evidence" value="ECO:0007669"/>
    <property type="project" value="InterPro"/>
</dbReference>
<dbReference type="GO" id="GO:0015232">
    <property type="term" value="F:heme transmembrane transporter activity"/>
    <property type="evidence" value="ECO:0007669"/>
    <property type="project" value="InterPro"/>
</dbReference>
<dbReference type="GO" id="GO:0017004">
    <property type="term" value="P:cytochrome complex assembly"/>
    <property type="evidence" value="ECO:0007669"/>
    <property type="project" value="UniProtKB-KW"/>
</dbReference>
<dbReference type="InterPro" id="IPR002541">
    <property type="entry name" value="Cyt_c_assembly"/>
</dbReference>
<dbReference type="InterPro" id="IPR003557">
    <property type="entry name" value="Cyt_c_biogenesis_CcmC"/>
</dbReference>
<dbReference type="InterPro" id="IPR045062">
    <property type="entry name" value="Cyt_c_biogenesis_CcsA/CcmC"/>
</dbReference>
<dbReference type="NCBIfam" id="TIGR01191">
    <property type="entry name" value="ccmC"/>
    <property type="match status" value="1"/>
</dbReference>
<dbReference type="PANTHER" id="PTHR30071:SF1">
    <property type="entry name" value="CYTOCHROME B_B6 PROTEIN-RELATED"/>
    <property type="match status" value="1"/>
</dbReference>
<dbReference type="PANTHER" id="PTHR30071">
    <property type="entry name" value="HEME EXPORTER PROTEIN C"/>
    <property type="match status" value="1"/>
</dbReference>
<dbReference type="Pfam" id="PF01578">
    <property type="entry name" value="Cytochrom_C_asm"/>
    <property type="match status" value="1"/>
</dbReference>
<dbReference type="PRINTS" id="PR01386">
    <property type="entry name" value="CCMCBIOGNSIS"/>
</dbReference>
<reference key="1">
    <citation type="journal article" date="2001" name="Nature">
        <title>Genome sequence of enterohaemorrhagic Escherichia coli O157:H7.</title>
        <authorList>
            <person name="Perna N.T."/>
            <person name="Plunkett G. III"/>
            <person name="Burland V."/>
            <person name="Mau B."/>
            <person name="Glasner J.D."/>
            <person name="Rose D.J."/>
            <person name="Mayhew G.F."/>
            <person name="Evans P.S."/>
            <person name="Gregor J."/>
            <person name="Kirkpatrick H.A."/>
            <person name="Posfai G."/>
            <person name="Hackett J."/>
            <person name="Klink S."/>
            <person name="Boutin A."/>
            <person name="Shao Y."/>
            <person name="Miller L."/>
            <person name="Grotbeck E.J."/>
            <person name="Davis N.W."/>
            <person name="Lim A."/>
            <person name="Dimalanta E.T."/>
            <person name="Potamousis K."/>
            <person name="Apodaca J."/>
            <person name="Anantharaman T.S."/>
            <person name="Lin J."/>
            <person name="Yen G."/>
            <person name="Schwartz D.C."/>
            <person name="Welch R.A."/>
            <person name="Blattner F.R."/>
        </authorList>
    </citation>
    <scope>NUCLEOTIDE SEQUENCE [LARGE SCALE GENOMIC DNA]</scope>
    <source>
        <strain>O157:H7 / EDL933 / ATCC 700927 / EHEC</strain>
    </source>
</reference>
<reference key="2">
    <citation type="journal article" date="2001" name="DNA Res.">
        <title>Complete genome sequence of enterohemorrhagic Escherichia coli O157:H7 and genomic comparison with a laboratory strain K-12.</title>
        <authorList>
            <person name="Hayashi T."/>
            <person name="Makino K."/>
            <person name="Ohnishi M."/>
            <person name="Kurokawa K."/>
            <person name="Ishii K."/>
            <person name="Yokoyama K."/>
            <person name="Han C.-G."/>
            <person name="Ohtsubo E."/>
            <person name="Nakayama K."/>
            <person name="Murata T."/>
            <person name="Tanaka M."/>
            <person name="Tobe T."/>
            <person name="Iida T."/>
            <person name="Takami H."/>
            <person name="Honda T."/>
            <person name="Sasakawa C."/>
            <person name="Ogasawara N."/>
            <person name="Yasunaga T."/>
            <person name="Kuhara S."/>
            <person name="Shiba T."/>
            <person name="Hattori M."/>
            <person name="Shinagawa H."/>
        </authorList>
    </citation>
    <scope>NUCLEOTIDE SEQUENCE [LARGE SCALE GENOMIC DNA]</scope>
    <source>
        <strain>O157:H7 / Sakai / RIMD 0509952 / EHEC</strain>
    </source>
</reference>
<organism>
    <name type="scientific">Escherichia coli O157:H7</name>
    <dbReference type="NCBI Taxonomy" id="83334"/>
    <lineage>
        <taxon>Bacteria</taxon>
        <taxon>Pseudomonadati</taxon>
        <taxon>Pseudomonadota</taxon>
        <taxon>Gammaproteobacteria</taxon>
        <taxon>Enterobacterales</taxon>
        <taxon>Enterobacteriaceae</taxon>
        <taxon>Escherichia</taxon>
    </lineage>
</organism>
<gene>
    <name type="primary">ccmC</name>
    <name type="ordered locus">Z3456</name>
    <name type="ordered locus">ECs3088</name>
</gene>
<evidence type="ECO:0000250" key="1"/>
<evidence type="ECO:0000255" key="2"/>
<evidence type="ECO:0000305" key="3"/>
<accession>P0ABM3</accession>
<accession>P33929</accession>
<comment type="function">
    <text evidence="1">Required for the export of heme to the periplasm for the biogenesis of c-type cytochromes.</text>
</comment>
<comment type="subcellular location">
    <subcellularLocation>
        <location evidence="1">Cell inner membrane</location>
        <topology evidence="1">Multi-pass membrane protein</topology>
    </subcellularLocation>
</comment>
<comment type="similarity">
    <text evidence="3">Belongs to the CcmC/CycZ/HelC family.</text>
</comment>